<feature type="chain" id="PRO_0000328679" description="AP-1 complex subunit gamma">
    <location>
        <begin position="1"/>
        <end position="895"/>
    </location>
</feature>
<feature type="repeat" description="HEAT 1">
    <location>
        <begin position="130"/>
        <end position="166"/>
    </location>
</feature>
<feature type="repeat" description="HEAT 2">
    <location>
        <begin position="167"/>
        <end position="205"/>
    </location>
</feature>
<feature type="repeat" description="HEAT 3">
    <location>
        <begin position="211"/>
        <end position="256"/>
    </location>
</feature>
<feature type="repeat" description="HEAT 4">
    <location>
        <begin position="301"/>
        <end position="339"/>
    </location>
</feature>
<feature type="repeat" description="HEAT 5">
    <location>
        <begin position="341"/>
        <end position="376"/>
    </location>
</feature>
<feature type="domain" description="GAE" evidence="2">
    <location>
        <begin position="775"/>
        <end position="893"/>
    </location>
</feature>
<feature type="region of interest" description="Disordered" evidence="3">
    <location>
        <begin position="591"/>
        <end position="687"/>
    </location>
</feature>
<feature type="region of interest" description="Disordered" evidence="3">
    <location>
        <begin position="706"/>
        <end position="733"/>
    </location>
</feature>
<feature type="region of interest" description="Disordered" evidence="3">
    <location>
        <begin position="746"/>
        <end position="770"/>
    </location>
</feature>
<feature type="compositionally biased region" description="Low complexity" evidence="3">
    <location>
        <begin position="604"/>
        <end position="626"/>
    </location>
</feature>
<feature type="compositionally biased region" description="Low complexity" evidence="3">
    <location>
        <begin position="639"/>
        <end position="658"/>
    </location>
</feature>
<feature type="compositionally biased region" description="Low complexity" evidence="3">
    <location>
        <begin position="675"/>
        <end position="687"/>
    </location>
</feature>
<feature type="compositionally biased region" description="Low complexity" evidence="3">
    <location>
        <begin position="706"/>
        <end position="731"/>
    </location>
</feature>
<feature type="compositionally biased region" description="Low complexity" evidence="3">
    <location>
        <begin position="746"/>
        <end position="765"/>
    </location>
</feature>
<feature type="mutagenesis site" description="Decrease in the interaction with rhgA." evidence="4">
    <original>R</original>
    <variation>Q</variation>
    <location>
        <position position="871"/>
    </location>
</feature>
<feature type="mutagenesis site" description="Decrease in the interaction with rhgA." evidence="4">
    <original>K</original>
    <variation>Q</variation>
    <location>
        <position position="873"/>
    </location>
</feature>
<proteinExistence type="evidence at protein level"/>
<accession>Q8I8U2</accession>
<accession>Q54T69</accession>
<keyword id="KW-0968">Cytoplasmic vesicle</keyword>
<keyword id="KW-0333">Golgi apparatus</keyword>
<keyword id="KW-0472">Membrane</keyword>
<keyword id="KW-0653">Protein transport</keyword>
<keyword id="KW-1185">Reference proteome</keyword>
<keyword id="KW-0677">Repeat</keyword>
<keyword id="KW-0813">Transport</keyword>
<reference key="1">
    <citation type="journal article" date="2003" name="Mol. Biol. Cell">
        <title>The AP-1 clathrin-adaptor is required for lysosomal enzymes sorting and biogenesis of the contractile vacuole complex in Dictyostelium cells.</title>
        <authorList>
            <person name="Lefkir Y."/>
            <person name="de Chassey B."/>
            <person name="Dubois A."/>
            <person name="Bogdanovic A."/>
            <person name="Brady R.J."/>
            <person name="Destaing O."/>
            <person name="Bruckert F."/>
            <person name="O'Halloran T.J."/>
            <person name="Cosson P."/>
            <person name="Letourneur F."/>
        </authorList>
    </citation>
    <scope>NUCLEOTIDE SEQUENCE [LARGE SCALE GENOMIC DNA]</scope>
</reference>
<reference key="2">
    <citation type="journal article" date="2005" name="Nature">
        <title>The genome of the social amoeba Dictyostelium discoideum.</title>
        <authorList>
            <person name="Eichinger L."/>
            <person name="Pachebat J.A."/>
            <person name="Gloeckner G."/>
            <person name="Rajandream M.A."/>
            <person name="Sucgang R."/>
            <person name="Berriman M."/>
            <person name="Song J."/>
            <person name="Olsen R."/>
            <person name="Szafranski K."/>
            <person name="Xu Q."/>
            <person name="Tunggal B."/>
            <person name="Kummerfeld S."/>
            <person name="Madera M."/>
            <person name="Konfortov B.A."/>
            <person name="Rivero F."/>
            <person name="Bankier A.T."/>
            <person name="Lehmann R."/>
            <person name="Hamlin N."/>
            <person name="Davies R."/>
            <person name="Gaudet P."/>
            <person name="Fey P."/>
            <person name="Pilcher K."/>
            <person name="Chen G."/>
            <person name="Saunders D."/>
            <person name="Sodergren E.J."/>
            <person name="Davis P."/>
            <person name="Kerhornou A."/>
            <person name="Nie X."/>
            <person name="Hall N."/>
            <person name="Anjard C."/>
            <person name="Hemphill L."/>
            <person name="Bason N."/>
            <person name="Farbrother P."/>
            <person name="Desany B."/>
            <person name="Just E."/>
            <person name="Morio T."/>
            <person name="Rost R."/>
            <person name="Churcher C.M."/>
            <person name="Cooper J."/>
            <person name="Haydock S."/>
            <person name="van Driessche N."/>
            <person name="Cronin A."/>
            <person name="Goodhead I."/>
            <person name="Muzny D.M."/>
            <person name="Mourier T."/>
            <person name="Pain A."/>
            <person name="Lu M."/>
            <person name="Harper D."/>
            <person name="Lindsay R."/>
            <person name="Hauser H."/>
            <person name="James K.D."/>
            <person name="Quiles M."/>
            <person name="Madan Babu M."/>
            <person name="Saito T."/>
            <person name="Buchrieser C."/>
            <person name="Wardroper A."/>
            <person name="Felder M."/>
            <person name="Thangavelu M."/>
            <person name="Johnson D."/>
            <person name="Knights A."/>
            <person name="Loulseged H."/>
            <person name="Mungall K.L."/>
            <person name="Oliver K."/>
            <person name="Price C."/>
            <person name="Quail M.A."/>
            <person name="Urushihara H."/>
            <person name="Hernandez J."/>
            <person name="Rabbinowitsch E."/>
            <person name="Steffen D."/>
            <person name="Sanders M."/>
            <person name="Ma J."/>
            <person name="Kohara Y."/>
            <person name="Sharp S."/>
            <person name="Simmonds M.N."/>
            <person name="Spiegler S."/>
            <person name="Tivey A."/>
            <person name="Sugano S."/>
            <person name="White B."/>
            <person name="Walker D."/>
            <person name="Woodward J.R."/>
            <person name="Winckler T."/>
            <person name="Tanaka Y."/>
            <person name="Shaulsky G."/>
            <person name="Schleicher M."/>
            <person name="Weinstock G.M."/>
            <person name="Rosenthal A."/>
            <person name="Cox E.C."/>
            <person name="Chisholm R.L."/>
            <person name="Gibbs R.A."/>
            <person name="Loomis W.F."/>
            <person name="Platzer M."/>
            <person name="Kay R.R."/>
            <person name="Williams J.G."/>
            <person name="Dear P.H."/>
            <person name="Noegel A.A."/>
            <person name="Barrell B.G."/>
            <person name="Kuspa A."/>
        </authorList>
    </citation>
    <scope>NUCLEOTIDE SEQUENCE [LARGE SCALE GENOMIC DNA]</scope>
    <source>
        <strain>AX4</strain>
    </source>
</reference>
<reference key="3">
    <citation type="journal article" date="2006" name="J. Cell Sci.">
        <title>Acidic clusters target transmembrane proteins to the contractile vacuole in Dictyostelium cells.</title>
        <authorList>
            <person name="Mercanti V."/>
            <person name="Blanc C."/>
            <person name="Lefkir Y."/>
            <person name="Cosson P."/>
            <person name="Letourneur F."/>
        </authorList>
    </citation>
    <scope>INTERACTION WITH RHGA</scope>
    <scope>MUTAGENESIS OF ARG-871 AND LYS-873</scope>
</reference>
<dbReference type="EMBL" id="AY144597">
    <property type="protein sequence ID" value="AAN41659.1"/>
    <property type="molecule type" value="mRNA"/>
</dbReference>
<dbReference type="EMBL" id="AAFI02000044">
    <property type="protein sequence ID" value="EAL66400.1"/>
    <property type="molecule type" value="Genomic_DNA"/>
</dbReference>
<dbReference type="RefSeq" id="XP_640382.1">
    <property type="nucleotide sequence ID" value="XM_635290.1"/>
</dbReference>
<dbReference type="SMR" id="Q8I8U2"/>
<dbReference type="FunCoup" id="Q8I8U2">
    <property type="interactions" value="648"/>
</dbReference>
<dbReference type="STRING" id="44689.Q8I8U2"/>
<dbReference type="GlyGen" id="Q8I8U2">
    <property type="glycosylation" value="2 sites"/>
</dbReference>
<dbReference type="PaxDb" id="44689-DDB0214928"/>
<dbReference type="EnsemblProtists" id="EAL66400">
    <property type="protein sequence ID" value="EAL66400"/>
    <property type="gene ID" value="DDB_G0281957"/>
</dbReference>
<dbReference type="GeneID" id="8623337"/>
<dbReference type="KEGG" id="ddi:DDB_G0281957"/>
<dbReference type="dictyBase" id="DDB_G0281957">
    <property type="gene designation" value="ap1g1"/>
</dbReference>
<dbReference type="VEuPathDB" id="AmoebaDB:DDB_G0281957"/>
<dbReference type="eggNOG" id="KOG1062">
    <property type="taxonomic scope" value="Eukaryota"/>
</dbReference>
<dbReference type="HOGENOM" id="CLU_003824_0_0_1"/>
<dbReference type="InParanoid" id="Q8I8U2"/>
<dbReference type="OMA" id="AICAMRI"/>
<dbReference type="PhylomeDB" id="Q8I8U2"/>
<dbReference type="Reactome" id="R-DDI-432720">
    <property type="pathway name" value="Lysosome Vesicle Biogenesis"/>
</dbReference>
<dbReference type="PRO" id="PR:Q8I8U2"/>
<dbReference type="Proteomes" id="UP000002195">
    <property type="component" value="Chromosome 3"/>
</dbReference>
<dbReference type="GO" id="GO:0030121">
    <property type="term" value="C:AP-1 adaptor complex"/>
    <property type="evidence" value="ECO:0000314"/>
    <property type="project" value="dictyBase"/>
</dbReference>
<dbReference type="GO" id="GO:0030130">
    <property type="term" value="C:clathrin coat of trans-Golgi network vesicle"/>
    <property type="evidence" value="ECO:0000314"/>
    <property type="project" value="dictyBase"/>
</dbReference>
<dbReference type="GO" id="GO:0005829">
    <property type="term" value="C:cytosol"/>
    <property type="evidence" value="ECO:0007669"/>
    <property type="project" value="GOC"/>
</dbReference>
<dbReference type="GO" id="GO:0035615">
    <property type="term" value="F:clathrin adaptor activity"/>
    <property type="evidence" value="ECO:0000314"/>
    <property type="project" value="dictyBase"/>
</dbReference>
<dbReference type="GO" id="GO:0030276">
    <property type="term" value="F:clathrin binding"/>
    <property type="evidence" value="ECO:0000353"/>
    <property type="project" value="dictyBase"/>
</dbReference>
<dbReference type="GO" id="GO:0006895">
    <property type="term" value="P:Golgi to endosome transport"/>
    <property type="evidence" value="ECO:0000314"/>
    <property type="project" value="dictyBase"/>
</dbReference>
<dbReference type="GO" id="GO:0006896">
    <property type="term" value="P:Golgi to vacuole transport"/>
    <property type="evidence" value="ECO:0000318"/>
    <property type="project" value="GO_Central"/>
</dbReference>
<dbReference type="GO" id="GO:0006886">
    <property type="term" value="P:intracellular protein transport"/>
    <property type="evidence" value="ECO:0007669"/>
    <property type="project" value="InterPro"/>
</dbReference>
<dbReference type="FunFam" id="1.25.10.10:FF:000030">
    <property type="entry name" value="AP-1 complex subunit gamma"/>
    <property type="match status" value="1"/>
</dbReference>
<dbReference type="Gene3D" id="2.60.40.1230">
    <property type="match status" value="1"/>
</dbReference>
<dbReference type="Gene3D" id="1.25.10.10">
    <property type="entry name" value="Leucine-rich Repeat Variant"/>
    <property type="match status" value="1"/>
</dbReference>
<dbReference type="InterPro" id="IPR050840">
    <property type="entry name" value="Adaptor_Complx_Large_Subunit"/>
</dbReference>
<dbReference type="InterPro" id="IPR017107">
    <property type="entry name" value="AP1_complex_gsu"/>
</dbReference>
<dbReference type="InterPro" id="IPR011989">
    <property type="entry name" value="ARM-like"/>
</dbReference>
<dbReference type="InterPro" id="IPR016024">
    <property type="entry name" value="ARM-type_fold"/>
</dbReference>
<dbReference type="InterPro" id="IPR002553">
    <property type="entry name" value="Clathrin/coatomer_adapt-like_N"/>
</dbReference>
<dbReference type="InterPro" id="IPR008152">
    <property type="entry name" value="Clathrin_a/b/g-adaptin_app_Ig"/>
</dbReference>
<dbReference type="InterPro" id="IPR013041">
    <property type="entry name" value="Clathrin_app_Ig-like_sf"/>
</dbReference>
<dbReference type="InterPro" id="IPR008153">
    <property type="entry name" value="GAE_dom"/>
</dbReference>
<dbReference type="PANTHER" id="PTHR22780">
    <property type="entry name" value="ADAPTIN, ALPHA/GAMMA/EPSILON"/>
    <property type="match status" value="1"/>
</dbReference>
<dbReference type="Pfam" id="PF01602">
    <property type="entry name" value="Adaptin_N"/>
    <property type="match status" value="1"/>
</dbReference>
<dbReference type="Pfam" id="PF02883">
    <property type="entry name" value="Alpha_adaptinC2"/>
    <property type="match status" value="1"/>
</dbReference>
<dbReference type="PIRSF" id="PIRSF037094">
    <property type="entry name" value="AP1_complex_gamma"/>
    <property type="match status" value="1"/>
</dbReference>
<dbReference type="SMART" id="SM00809">
    <property type="entry name" value="Alpha_adaptinC2"/>
    <property type="match status" value="1"/>
</dbReference>
<dbReference type="SUPFAM" id="SSF48371">
    <property type="entry name" value="ARM repeat"/>
    <property type="match status" value="1"/>
</dbReference>
<dbReference type="SUPFAM" id="SSF49348">
    <property type="entry name" value="Clathrin adaptor appendage domain"/>
    <property type="match status" value="1"/>
</dbReference>
<dbReference type="PROSITE" id="PS50180">
    <property type="entry name" value="GAE"/>
    <property type="match status" value="1"/>
</dbReference>
<protein>
    <recommendedName>
        <fullName>AP-1 complex subunit gamma</fullName>
    </recommendedName>
    <alternativeName>
        <fullName>Adaptor protein complex AP-1 subunit gamma</fullName>
    </alternativeName>
    <alternativeName>
        <fullName>Adaptor-related protein complex 1 subunit gamma</fullName>
    </alternativeName>
    <alternativeName>
        <fullName>Clathrin assembly protein complex 1 gamma large chain</fullName>
    </alternativeName>
    <alternativeName>
        <fullName>Gamma1-adaptin</fullName>
    </alternativeName>
</protein>
<evidence type="ECO:0000250" key="1"/>
<evidence type="ECO:0000255" key="2">
    <source>
        <dbReference type="PROSITE-ProRule" id="PRU00093"/>
    </source>
</evidence>
<evidence type="ECO:0000256" key="3">
    <source>
        <dbReference type="SAM" id="MobiDB-lite"/>
    </source>
</evidence>
<evidence type="ECO:0000269" key="4">
    <source>
    </source>
</evidence>
<evidence type="ECO:0000305" key="5"/>
<sequence>MSSKLRDLIKTVRSCKTAAEERSQIAKESALIRTAMKEEDLESRQRNVAKLLYIHMLGYPTQFGQMECLKLIVSPSYADKRIGYLGLMLLLDEKQEVLLLATNCIRGDIMNSNQFIVGVSLCAFGNICSTAMARDISPEIEKVISHSNPYIRKKAALCAIRVLRKVPDLTENYIPKIKALLSERNHAVILTALTLIIEICEMDSTQIIHFKKMVPQLVRILKSLTSSGYLPEHDIGGVTDPFLQVKILRLLRILGQNDPEASDAMNDILAQVSTNTDSTKNVGNAILYECVQTIMTIESENGLKVMAINILGRFLLNRDNNIRYVALNTLSRVVNTDIQAVQRHRNTIVECLKDPDVSIRCRALDLIYSLVTESNIRVLVRELLNFLLIADAQFKSELVAKLCIVTEKYAPNKRWQIDTILRVMSIAGNFIPDEVPSNLIQLISSTPELSSYAVQKLYLALKQDITQQPLTQVGLWCIGEYGDLLVADKSQLPKDEDGLSLNVSEQAVIDIIDLIFRHATTTQATRQYSLTSLAKLSSRFSQSSLQRIKTMIDNYKQNINLELQQRACEYSTLFDFDKKASILDRMPPIEKQEESPHIGNKNIPTQTPPQQHYQQQQQQPQQQSSQFGSILDGLDSPTQSSANSGNNNNNNNKQGGNAMSLLEDIFGSAPTPTSNGNMNNNNNMNNMNNNMNNNYAMGGMGMNNNNNNSMGGMMNNNNNNNNNNNNNNNNNKSQASALLDIMGDLQLTPTPQQPQSQSQQALSPTNQTSVLQPVPQPLTFLVYQKHGLNISYECSKPQPNNLSLTNINMVITNTGSSPITNFSLQAAVPKYLKIQLLAPSSTVIPPNNSGEVTQVSKVLNSQQGQKPILLRLKLDFQINGQPFSDVPDTPLPSLF</sequence>
<comment type="function">
    <text>Subunit of clathrin-associated adaptor protein complex 1 that plays a role in protein sorting in the trans-Golgi network (TGN) and endosomes. The AP complexes mediate the recruitment of clathrin to membranes and the recognition of sorting signals within the cytosolic tails of transmembrane cargo molecules. Also involved in early steps of phagocytosis and macropinocytosis.</text>
</comment>
<comment type="subunit">
    <text evidence="1 4">Adaptor protein complex 1 (AP-1) is a heterotetramer composed of two large adaptins (gamma-type subunit and beta-type subunit), a medium adaptin (mu-type subunit) and a small adaptin (sigma-type subunit) (By similarity). Interacts with rhgA.</text>
</comment>
<comment type="subcellular location">
    <subcellularLocation>
        <location>Golgi apparatus</location>
        <location>trans-Golgi network</location>
    </subcellularLocation>
    <subcellularLocation>
        <location evidence="1">Cytoplasmic vesicle</location>
        <location evidence="1">Clathrin-coated vesicle membrane</location>
    </subcellularLocation>
</comment>
<comment type="similarity">
    <text evidence="5">Belongs to the adaptor complexes large subunit family.</text>
</comment>
<organism>
    <name type="scientific">Dictyostelium discoideum</name>
    <name type="common">Social amoeba</name>
    <dbReference type="NCBI Taxonomy" id="44689"/>
    <lineage>
        <taxon>Eukaryota</taxon>
        <taxon>Amoebozoa</taxon>
        <taxon>Evosea</taxon>
        <taxon>Eumycetozoa</taxon>
        <taxon>Dictyostelia</taxon>
        <taxon>Dictyosteliales</taxon>
        <taxon>Dictyosteliaceae</taxon>
        <taxon>Dictyostelium</taxon>
    </lineage>
</organism>
<gene>
    <name type="primary">ap1g1</name>
    <name type="synonym">aptC</name>
    <name type="ORF">DDB_G0281957</name>
</gene>
<name>AP1G_DICDI</name>